<comment type="function">
    <text evidence="1">Aspartyl-tRNA synthetase with relaxed tRNA specificity since it is able to aspartylate not only its cognate tRNA(Asp) but also tRNA(Asn). Reaction proceeds in two steps: L-aspartate is first activated by ATP to form Asp-AMP and then transferred to the acceptor end of tRNA(Asp/Asn).</text>
</comment>
<comment type="catalytic activity">
    <reaction evidence="1">
        <text>tRNA(Asx) + L-aspartate + ATP = L-aspartyl-tRNA(Asx) + AMP + diphosphate</text>
        <dbReference type="Rhea" id="RHEA:18349"/>
        <dbReference type="Rhea" id="RHEA-COMP:9710"/>
        <dbReference type="Rhea" id="RHEA-COMP:9711"/>
        <dbReference type="ChEBI" id="CHEBI:29991"/>
        <dbReference type="ChEBI" id="CHEBI:30616"/>
        <dbReference type="ChEBI" id="CHEBI:33019"/>
        <dbReference type="ChEBI" id="CHEBI:78442"/>
        <dbReference type="ChEBI" id="CHEBI:78516"/>
        <dbReference type="ChEBI" id="CHEBI:456215"/>
        <dbReference type="EC" id="6.1.1.23"/>
    </reaction>
</comment>
<comment type="cofactor">
    <cofactor evidence="1">
        <name>Mg(2+)</name>
        <dbReference type="ChEBI" id="CHEBI:18420"/>
    </cofactor>
    <text evidence="1">Binds 3 Mg(2+) cations per subunit. The strongest magnesium site (Mg1) is bound to the beta- and gamma-phosphates of ATP and four water molecules complete its coordination sphere.</text>
</comment>
<comment type="subunit">
    <text evidence="1">Homodimer.</text>
</comment>
<comment type="subcellular location">
    <subcellularLocation>
        <location evidence="1">Cytoplasm</location>
    </subcellularLocation>
</comment>
<comment type="similarity">
    <text evidence="1">Belongs to the class-II aminoacyl-tRNA synthetase family. Type 2 subfamily.</text>
</comment>
<sequence length="431" mass="49791">MLKDAYTADVTPERDGEEVRLAGWVHEVRDLGGIKFVLLRDRTGIVQLTLPKQKVPKETFEKVPKLTKESVIRVEGTVQANEKAPGGVEVIPQRIEVLSESDTHLPLDPTGKVDADLDTRLDARVLDLRREEPQAIFKIRNVVTTAIREFLEERGFIEVHTPKIIASATEGGTELFPVVYFERDAYLAQSPQLYKQMLMAAGFERVYEIGPIFRAEEHNTRRHLNEAISVDIEMSFIESEEDVMRVLEELLAHVFRKVREECEKELEALDRELPELETPFERITYEETLDLLSEHGIEVEWGEDLPTEAERKLGEIFEEPFFITEWPRETRPFYTMAKDDEVTTAFDLMYQGLELASGAQREHRYDVLVRQIEEQGLSPEDFRHYLEAFKYGMPPHGGWGLGLERTLMTITGAENIREVTLFPRDRKRLHP</sequence>
<name>SYDND_METKA</name>
<protein>
    <recommendedName>
        <fullName evidence="1">Aspartate--tRNA(Asp/Asn) ligase</fullName>
        <ecNumber evidence="1">6.1.1.23</ecNumber>
    </recommendedName>
    <alternativeName>
        <fullName evidence="1">Aspartyl-tRNA synthetase</fullName>
        <shortName evidence="1">AspRS</shortName>
    </alternativeName>
    <alternativeName>
        <fullName evidence="1">Non-discriminating aspartyl-tRNA synthetase</fullName>
        <shortName evidence="1">ND-AspRS</shortName>
    </alternativeName>
</protein>
<dbReference type="EC" id="6.1.1.23" evidence="1"/>
<dbReference type="EMBL" id="AE009439">
    <property type="protein sequence ID" value="AAM01924.1"/>
    <property type="molecule type" value="Genomic_DNA"/>
</dbReference>
<dbReference type="RefSeq" id="WP_011019079.1">
    <property type="nucleotide sequence ID" value="NC_003551.1"/>
</dbReference>
<dbReference type="SMR" id="Q8TXG4"/>
<dbReference type="FunCoup" id="Q8TXG4">
    <property type="interactions" value="233"/>
</dbReference>
<dbReference type="STRING" id="190192.MK0710"/>
<dbReference type="PaxDb" id="190192-MK0710"/>
<dbReference type="EnsemblBacteria" id="AAM01924">
    <property type="protein sequence ID" value="AAM01924"/>
    <property type="gene ID" value="MK0710"/>
</dbReference>
<dbReference type="GeneID" id="1476811"/>
<dbReference type="KEGG" id="mka:MK0710"/>
<dbReference type="PATRIC" id="fig|190192.8.peg.751"/>
<dbReference type="HOGENOM" id="CLU_004553_2_1_2"/>
<dbReference type="InParanoid" id="Q8TXG4"/>
<dbReference type="OrthoDB" id="5908at2157"/>
<dbReference type="Proteomes" id="UP000001826">
    <property type="component" value="Chromosome"/>
</dbReference>
<dbReference type="GO" id="GO:0017101">
    <property type="term" value="C:aminoacyl-tRNA synthetase multienzyme complex"/>
    <property type="evidence" value="ECO:0007669"/>
    <property type="project" value="TreeGrafter"/>
</dbReference>
<dbReference type="GO" id="GO:0005829">
    <property type="term" value="C:cytosol"/>
    <property type="evidence" value="ECO:0007669"/>
    <property type="project" value="TreeGrafter"/>
</dbReference>
<dbReference type="GO" id="GO:0004815">
    <property type="term" value="F:aspartate-tRNA ligase activity"/>
    <property type="evidence" value="ECO:0007669"/>
    <property type="project" value="UniProtKB-UniRule"/>
</dbReference>
<dbReference type="GO" id="GO:0050560">
    <property type="term" value="F:aspartate-tRNA(Asn) ligase activity"/>
    <property type="evidence" value="ECO:0007669"/>
    <property type="project" value="UniProtKB-EC"/>
</dbReference>
<dbReference type="GO" id="GO:0005524">
    <property type="term" value="F:ATP binding"/>
    <property type="evidence" value="ECO:0007669"/>
    <property type="project" value="UniProtKB-UniRule"/>
</dbReference>
<dbReference type="GO" id="GO:0000287">
    <property type="term" value="F:magnesium ion binding"/>
    <property type="evidence" value="ECO:0007669"/>
    <property type="project" value="UniProtKB-UniRule"/>
</dbReference>
<dbReference type="GO" id="GO:0003723">
    <property type="term" value="F:RNA binding"/>
    <property type="evidence" value="ECO:0007669"/>
    <property type="project" value="TreeGrafter"/>
</dbReference>
<dbReference type="GO" id="GO:0006422">
    <property type="term" value="P:aspartyl-tRNA aminoacylation"/>
    <property type="evidence" value="ECO:0007669"/>
    <property type="project" value="UniProtKB-UniRule"/>
</dbReference>
<dbReference type="CDD" id="cd00776">
    <property type="entry name" value="AsxRS_core"/>
    <property type="match status" value="1"/>
</dbReference>
<dbReference type="CDD" id="cd04316">
    <property type="entry name" value="ND_PkAspRS_like_N"/>
    <property type="match status" value="1"/>
</dbReference>
<dbReference type="FunFam" id="3.30.930.10:FF:000038">
    <property type="entry name" value="Aspartate--tRNA ligase"/>
    <property type="match status" value="1"/>
</dbReference>
<dbReference type="FunFam" id="2.40.50.140:FF:000324">
    <property type="entry name" value="Aspartate--tRNA(Asp/Asn) ligase"/>
    <property type="match status" value="1"/>
</dbReference>
<dbReference type="Gene3D" id="3.30.930.10">
    <property type="entry name" value="Bira Bifunctional Protein, Domain 2"/>
    <property type="match status" value="1"/>
</dbReference>
<dbReference type="Gene3D" id="2.40.50.140">
    <property type="entry name" value="Nucleic acid-binding proteins"/>
    <property type="match status" value="1"/>
</dbReference>
<dbReference type="HAMAP" id="MF_02075">
    <property type="entry name" value="Asp_tRNA_synth_type2"/>
    <property type="match status" value="1"/>
</dbReference>
<dbReference type="InterPro" id="IPR004364">
    <property type="entry name" value="Aa-tRNA-synt_II"/>
</dbReference>
<dbReference type="InterPro" id="IPR006195">
    <property type="entry name" value="aa-tRNA-synth_II"/>
</dbReference>
<dbReference type="InterPro" id="IPR045864">
    <property type="entry name" value="aa-tRNA-synth_II/BPL/LPL"/>
</dbReference>
<dbReference type="InterPro" id="IPR004523">
    <property type="entry name" value="Asp-tRNA_synthase_2"/>
</dbReference>
<dbReference type="InterPro" id="IPR002312">
    <property type="entry name" value="Asp/Asn-tRNA-synth_IIb"/>
</dbReference>
<dbReference type="InterPro" id="IPR012340">
    <property type="entry name" value="NA-bd_OB-fold"/>
</dbReference>
<dbReference type="InterPro" id="IPR004365">
    <property type="entry name" value="NA-bd_OB_tRNA"/>
</dbReference>
<dbReference type="NCBIfam" id="TIGR00458">
    <property type="entry name" value="aspS_nondisc"/>
    <property type="match status" value="1"/>
</dbReference>
<dbReference type="NCBIfam" id="NF003483">
    <property type="entry name" value="PRK05159.1"/>
    <property type="match status" value="1"/>
</dbReference>
<dbReference type="PANTHER" id="PTHR43450:SF1">
    <property type="entry name" value="ASPARTATE--TRNA LIGASE, CYTOPLASMIC"/>
    <property type="match status" value="1"/>
</dbReference>
<dbReference type="PANTHER" id="PTHR43450">
    <property type="entry name" value="ASPARTYL-TRNA SYNTHETASE"/>
    <property type="match status" value="1"/>
</dbReference>
<dbReference type="Pfam" id="PF00152">
    <property type="entry name" value="tRNA-synt_2"/>
    <property type="match status" value="1"/>
</dbReference>
<dbReference type="Pfam" id="PF01336">
    <property type="entry name" value="tRNA_anti-codon"/>
    <property type="match status" value="1"/>
</dbReference>
<dbReference type="PRINTS" id="PR01042">
    <property type="entry name" value="TRNASYNTHASP"/>
</dbReference>
<dbReference type="SUPFAM" id="SSF55681">
    <property type="entry name" value="Class II aaRS and biotin synthetases"/>
    <property type="match status" value="1"/>
</dbReference>
<dbReference type="SUPFAM" id="SSF50249">
    <property type="entry name" value="Nucleic acid-binding proteins"/>
    <property type="match status" value="1"/>
</dbReference>
<dbReference type="PROSITE" id="PS50862">
    <property type="entry name" value="AA_TRNA_LIGASE_II"/>
    <property type="match status" value="1"/>
</dbReference>
<keyword id="KW-0030">Aminoacyl-tRNA synthetase</keyword>
<keyword id="KW-0067">ATP-binding</keyword>
<keyword id="KW-0963">Cytoplasm</keyword>
<keyword id="KW-0436">Ligase</keyword>
<keyword id="KW-0460">Magnesium</keyword>
<keyword id="KW-0479">Metal-binding</keyword>
<keyword id="KW-0547">Nucleotide-binding</keyword>
<keyword id="KW-0648">Protein biosynthesis</keyword>
<keyword id="KW-1185">Reference proteome</keyword>
<feature type="chain" id="PRO_0000110996" description="Aspartate--tRNA(Asp/Asn) ligase">
    <location>
        <begin position="1"/>
        <end position="431"/>
    </location>
</feature>
<feature type="region of interest" description="Aspartate" evidence="1">
    <location>
        <begin position="192"/>
        <end position="195"/>
    </location>
</feature>
<feature type="binding site" evidence="1">
    <location>
        <position position="170"/>
    </location>
    <ligand>
        <name>L-aspartate</name>
        <dbReference type="ChEBI" id="CHEBI:29991"/>
    </ligand>
</feature>
<feature type="binding site" evidence="1">
    <location>
        <begin position="214"/>
        <end position="216"/>
    </location>
    <ligand>
        <name>ATP</name>
        <dbReference type="ChEBI" id="CHEBI:30616"/>
    </ligand>
</feature>
<feature type="binding site" evidence="1">
    <location>
        <position position="214"/>
    </location>
    <ligand>
        <name>L-aspartate</name>
        <dbReference type="ChEBI" id="CHEBI:29991"/>
    </ligand>
</feature>
<feature type="binding site" evidence="1">
    <location>
        <begin position="222"/>
        <end position="224"/>
    </location>
    <ligand>
        <name>ATP</name>
        <dbReference type="ChEBI" id="CHEBI:30616"/>
    </ligand>
</feature>
<feature type="binding site" evidence="1">
    <location>
        <position position="354"/>
    </location>
    <ligand>
        <name>ATP</name>
        <dbReference type="ChEBI" id="CHEBI:30616"/>
    </ligand>
</feature>
<feature type="binding site" evidence="1">
    <location>
        <position position="354"/>
    </location>
    <ligand>
        <name>Mg(2+)</name>
        <dbReference type="ChEBI" id="CHEBI:18420"/>
        <label>2</label>
    </ligand>
</feature>
<feature type="binding site" evidence="1">
    <location>
        <position position="354"/>
    </location>
    <ligand>
        <name>Mg(2+)</name>
        <dbReference type="ChEBI" id="CHEBI:18420"/>
        <label>3</label>
    </ligand>
</feature>
<feature type="binding site" evidence="1">
    <location>
        <position position="357"/>
    </location>
    <ligand>
        <name>L-aspartate</name>
        <dbReference type="ChEBI" id="CHEBI:29991"/>
    </ligand>
</feature>
<feature type="binding site" evidence="1">
    <location>
        <position position="357"/>
    </location>
    <ligand>
        <name>Mg(2+)</name>
        <dbReference type="ChEBI" id="CHEBI:18420"/>
        <label>2</label>
    </ligand>
</feature>
<feature type="binding site" evidence="1">
    <location>
        <position position="361"/>
    </location>
    <ligand>
        <name>L-aspartate</name>
        <dbReference type="ChEBI" id="CHEBI:29991"/>
    </ligand>
</feature>
<feature type="binding site" evidence="1">
    <location>
        <begin position="402"/>
        <end position="405"/>
    </location>
    <ligand>
        <name>ATP</name>
        <dbReference type="ChEBI" id="CHEBI:30616"/>
    </ligand>
</feature>
<feature type="site" description="Important for tRNA non-discrimination" evidence="1">
    <location>
        <position position="85"/>
    </location>
</feature>
<organism>
    <name type="scientific">Methanopyrus kandleri (strain AV19 / DSM 6324 / JCM 9639 / NBRC 100938)</name>
    <dbReference type="NCBI Taxonomy" id="190192"/>
    <lineage>
        <taxon>Archaea</taxon>
        <taxon>Methanobacteriati</taxon>
        <taxon>Methanobacteriota</taxon>
        <taxon>Methanomada group</taxon>
        <taxon>Methanopyri</taxon>
        <taxon>Methanopyrales</taxon>
        <taxon>Methanopyraceae</taxon>
        <taxon>Methanopyrus</taxon>
    </lineage>
</organism>
<evidence type="ECO:0000255" key="1">
    <source>
        <dbReference type="HAMAP-Rule" id="MF_02075"/>
    </source>
</evidence>
<reference key="1">
    <citation type="journal article" date="2002" name="Proc. Natl. Acad. Sci. U.S.A.">
        <title>The complete genome of hyperthermophile Methanopyrus kandleri AV19 and monophyly of archaeal methanogens.</title>
        <authorList>
            <person name="Slesarev A.I."/>
            <person name="Mezhevaya K.V."/>
            <person name="Makarova K.S."/>
            <person name="Polushin N.N."/>
            <person name="Shcherbinina O.V."/>
            <person name="Shakhova V.V."/>
            <person name="Belova G.I."/>
            <person name="Aravind L."/>
            <person name="Natale D.A."/>
            <person name="Rogozin I.B."/>
            <person name="Tatusov R.L."/>
            <person name="Wolf Y.I."/>
            <person name="Stetter K.O."/>
            <person name="Malykh A.G."/>
            <person name="Koonin E.V."/>
            <person name="Kozyavkin S.A."/>
        </authorList>
    </citation>
    <scope>NUCLEOTIDE SEQUENCE [LARGE SCALE GENOMIC DNA]</scope>
    <source>
        <strain>AV19 / DSM 6324 / JCM 9639 / NBRC 100938</strain>
    </source>
</reference>
<accession>Q8TXG4</accession>
<proteinExistence type="inferred from homology"/>
<gene>
    <name evidence="1" type="primary">aspS</name>
    <name type="ordered locus">MK0710</name>
</gene>